<name>CARM1_ORYSI</name>
<feature type="chain" id="PRO_0000294006" description="Probable histone-arginine methyltransferase CARM1">
    <location>
        <begin position="1"/>
        <end position="528"/>
    </location>
</feature>
<feature type="domain" description="SAM-dependent MTase PRMT-type" evidence="2">
    <location>
        <begin position="149"/>
        <end position="464"/>
    </location>
</feature>
<feature type="region of interest" description="Disordered" evidence="3">
    <location>
        <begin position="500"/>
        <end position="528"/>
    </location>
</feature>
<feature type="compositionally biased region" description="Low complexity" evidence="3">
    <location>
        <begin position="500"/>
        <end position="520"/>
    </location>
</feature>
<feature type="binding site" evidence="1">
    <location>
        <position position="166"/>
    </location>
    <ligand>
        <name>S-adenosyl-L-methionine</name>
        <dbReference type="ChEBI" id="CHEBI:59789"/>
    </ligand>
</feature>
<feature type="binding site" evidence="1">
    <location>
        <position position="175"/>
    </location>
    <ligand>
        <name>S-adenosyl-L-methionine</name>
        <dbReference type="ChEBI" id="CHEBI:59789"/>
    </ligand>
</feature>
<feature type="binding site" evidence="1">
    <location>
        <position position="199"/>
    </location>
    <ligand>
        <name>S-adenosyl-L-methionine</name>
        <dbReference type="ChEBI" id="CHEBI:59789"/>
    </ligand>
</feature>
<feature type="binding site" evidence="1">
    <location>
        <position position="221"/>
    </location>
    <ligand>
        <name>S-adenosyl-L-methionine</name>
        <dbReference type="ChEBI" id="CHEBI:59789"/>
    </ligand>
</feature>
<feature type="binding site" evidence="1">
    <location>
        <position position="251"/>
    </location>
    <ligand>
        <name>S-adenosyl-L-methionine</name>
        <dbReference type="ChEBI" id="CHEBI:59789"/>
    </ligand>
</feature>
<feature type="binding site" evidence="1">
    <location>
        <position position="279"/>
    </location>
    <ligand>
        <name>S-adenosyl-L-methionine</name>
        <dbReference type="ChEBI" id="CHEBI:59789"/>
    </ligand>
</feature>
<protein>
    <recommendedName>
        <fullName>Probable histone-arginine methyltransferase CARM1</fullName>
        <ecNumber>2.1.1.319</ecNumber>
    </recommendedName>
    <alternativeName>
        <fullName>Protein arginine N-methyltransferase 4</fullName>
    </alternativeName>
</protein>
<organism>
    <name type="scientific">Oryza sativa subsp. indica</name>
    <name type="common">Rice</name>
    <dbReference type="NCBI Taxonomy" id="39946"/>
    <lineage>
        <taxon>Eukaryota</taxon>
        <taxon>Viridiplantae</taxon>
        <taxon>Streptophyta</taxon>
        <taxon>Embryophyta</taxon>
        <taxon>Tracheophyta</taxon>
        <taxon>Spermatophyta</taxon>
        <taxon>Magnoliopsida</taxon>
        <taxon>Liliopsida</taxon>
        <taxon>Poales</taxon>
        <taxon>Poaceae</taxon>
        <taxon>BOP clade</taxon>
        <taxon>Oryzoideae</taxon>
        <taxon>Oryzeae</taxon>
        <taxon>Oryzinae</taxon>
        <taxon>Oryza</taxon>
        <taxon>Oryza sativa</taxon>
    </lineage>
</organism>
<reference key="1">
    <citation type="journal article" date="2005" name="PLoS Biol.">
        <title>The genomes of Oryza sativa: a history of duplications.</title>
        <authorList>
            <person name="Yu J."/>
            <person name="Wang J."/>
            <person name="Lin W."/>
            <person name="Li S."/>
            <person name="Li H."/>
            <person name="Zhou J."/>
            <person name="Ni P."/>
            <person name="Dong W."/>
            <person name="Hu S."/>
            <person name="Zeng C."/>
            <person name="Zhang J."/>
            <person name="Zhang Y."/>
            <person name="Li R."/>
            <person name="Xu Z."/>
            <person name="Li S."/>
            <person name="Li X."/>
            <person name="Zheng H."/>
            <person name="Cong L."/>
            <person name="Lin L."/>
            <person name="Yin J."/>
            <person name="Geng J."/>
            <person name="Li G."/>
            <person name="Shi J."/>
            <person name="Liu J."/>
            <person name="Lv H."/>
            <person name="Li J."/>
            <person name="Wang J."/>
            <person name="Deng Y."/>
            <person name="Ran L."/>
            <person name="Shi X."/>
            <person name="Wang X."/>
            <person name="Wu Q."/>
            <person name="Li C."/>
            <person name="Ren X."/>
            <person name="Wang J."/>
            <person name="Wang X."/>
            <person name="Li D."/>
            <person name="Liu D."/>
            <person name="Zhang X."/>
            <person name="Ji Z."/>
            <person name="Zhao W."/>
            <person name="Sun Y."/>
            <person name="Zhang Z."/>
            <person name="Bao J."/>
            <person name="Han Y."/>
            <person name="Dong L."/>
            <person name="Ji J."/>
            <person name="Chen P."/>
            <person name="Wu S."/>
            <person name="Liu J."/>
            <person name="Xiao Y."/>
            <person name="Bu D."/>
            <person name="Tan J."/>
            <person name="Yang L."/>
            <person name="Ye C."/>
            <person name="Zhang J."/>
            <person name="Xu J."/>
            <person name="Zhou Y."/>
            <person name="Yu Y."/>
            <person name="Zhang B."/>
            <person name="Zhuang S."/>
            <person name="Wei H."/>
            <person name="Liu B."/>
            <person name="Lei M."/>
            <person name="Yu H."/>
            <person name="Li Y."/>
            <person name="Xu H."/>
            <person name="Wei S."/>
            <person name="He X."/>
            <person name="Fang L."/>
            <person name="Zhang Z."/>
            <person name="Zhang Y."/>
            <person name="Huang X."/>
            <person name="Su Z."/>
            <person name="Tong W."/>
            <person name="Li J."/>
            <person name="Tong Z."/>
            <person name="Li S."/>
            <person name="Ye J."/>
            <person name="Wang L."/>
            <person name="Fang L."/>
            <person name="Lei T."/>
            <person name="Chen C.-S."/>
            <person name="Chen H.-C."/>
            <person name="Xu Z."/>
            <person name="Li H."/>
            <person name="Huang H."/>
            <person name="Zhang F."/>
            <person name="Xu H."/>
            <person name="Li N."/>
            <person name="Zhao C."/>
            <person name="Li S."/>
            <person name="Dong L."/>
            <person name="Huang Y."/>
            <person name="Li L."/>
            <person name="Xi Y."/>
            <person name="Qi Q."/>
            <person name="Li W."/>
            <person name="Zhang B."/>
            <person name="Hu W."/>
            <person name="Zhang Y."/>
            <person name="Tian X."/>
            <person name="Jiao Y."/>
            <person name="Liang X."/>
            <person name="Jin J."/>
            <person name="Gao L."/>
            <person name="Zheng W."/>
            <person name="Hao B."/>
            <person name="Liu S.-M."/>
            <person name="Wang W."/>
            <person name="Yuan L."/>
            <person name="Cao M."/>
            <person name="McDermott J."/>
            <person name="Samudrala R."/>
            <person name="Wang J."/>
            <person name="Wong G.K.-S."/>
            <person name="Yang H."/>
        </authorList>
    </citation>
    <scope>NUCLEOTIDE SEQUENCE [LARGE SCALE GENOMIC DNA]</scope>
    <source>
        <strain>cv. 93-11</strain>
    </source>
</reference>
<comment type="function">
    <text evidence="1">Methylates (mono- and asymmetric dimethylation) the guanidino nitrogens of arginyl residues in several proteins involved in DNA packaging, transcription regulation, and mRNA stability. Recruited to promoters upon gene activation, methylates histone H3 and activates transcription via chromatin remodeling.</text>
</comment>
<comment type="catalytic activity">
    <reaction>
        <text>L-arginyl-[protein] + 2 S-adenosyl-L-methionine = N(omega),N(omega)-dimethyl-L-arginyl-[protein] + 2 S-adenosyl-L-homocysteine + 2 H(+)</text>
        <dbReference type="Rhea" id="RHEA:48096"/>
        <dbReference type="Rhea" id="RHEA-COMP:10532"/>
        <dbReference type="Rhea" id="RHEA-COMP:11991"/>
        <dbReference type="ChEBI" id="CHEBI:15378"/>
        <dbReference type="ChEBI" id="CHEBI:29965"/>
        <dbReference type="ChEBI" id="CHEBI:57856"/>
        <dbReference type="ChEBI" id="CHEBI:59789"/>
        <dbReference type="ChEBI" id="CHEBI:61897"/>
        <dbReference type="EC" id="2.1.1.319"/>
    </reaction>
</comment>
<comment type="subcellular location">
    <subcellularLocation>
        <location evidence="1">Nucleus</location>
    </subcellularLocation>
    <subcellularLocation>
        <location evidence="1">Cytoplasm</location>
    </subcellularLocation>
</comment>
<comment type="similarity">
    <text evidence="2">Belongs to the class I-like SAM-binding methyltransferase superfamily. Protein arginine N-methyltransferase family.</text>
</comment>
<sequence length="528" mass="58580">MASPDLFPNVSFSHVSVPAAAGASTEVTGGATAVFGGDASTGAPRLSLVWSGETQAKHTLEIDLSDAQIFKLGPTEWLCVSGESEAKDGVEEKSYSRAIKVVLRTEAESKAFYLAFQQWKHRVISGKAGEPLENGLIIGSKSKFDTKIEASSAKMYFHYYGQLLHQQNMLQDFVRTGTYYAAVMENRSDFEGRVVVDVGAGSGILSLFAAQAGARHVYAVEASEMAEHAQRLISGNPSLGQRITVIKGKVEEVELPEKADILISEPMGTLLVNERMLESYVIARDRFLVPGGKMFPTTGRIHMAPFSDEYLYVEMANKALFWQQHNFFGVDLTPLHGSAFQGYFSQPVVDAFDPRLLVSPPTFHTLDFTTMKEEELYEIDIPLNFVASVGTRVHGLACWFDVLFNGSTVQRWLTTAPGSPTTHWYQLRCILSQPLYVMAGQEITGRLHLVAHSAQSYTIYLTMSAKMWGEGAEQGGILQTSTAKLELKEPYYRLSQPQPYVMQQDQQQQQLPSLQPQSPLWDYHYGQD</sequence>
<accession>A2YPT7</accession>
<accession>B8B5U5</accession>
<proteinExistence type="inferred from homology"/>
<gene>
    <name type="primary">CARM1</name>
    <name type="synonym">PRMT4</name>
    <name type="ORF">OsI_27289</name>
</gene>
<dbReference type="EC" id="2.1.1.319"/>
<dbReference type="EMBL" id="CM000132">
    <property type="protein sequence ID" value="EEC82664.1"/>
    <property type="molecule type" value="Genomic_DNA"/>
</dbReference>
<dbReference type="SMR" id="A2YPT7"/>
<dbReference type="STRING" id="39946.A2YPT7"/>
<dbReference type="EnsemblPlants" id="BGIOSGA026368-TA">
    <property type="protein sequence ID" value="BGIOSGA026368-PA"/>
    <property type="gene ID" value="BGIOSGA026368"/>
</dbReference>
<dbReference type="EnsemblPlants" id="OsIR64_07g0027650.01">
    <property type="protein sequence ID" value="OsIR64_07g0027650.01"/>
    <property type="gene ID" value="OsIR64_07g0027650"/>
</dbReference>
<dbReference type="EnsemblPlants" id="OsIR64_07g0027650.02">
    <property type="protein sequence ID" value="OsIR64_07g0027650.02"/>
    <property type="gene ID" value="OsIR64_07g0027650"/>
</dbReference>
<dbReference type="EnsemblPlants" id="OsKYG_07g0027370.02">
    <property type="protein sequence ID" value="OsKYG_07g0027370.02"/>
    <property type="gene ID" value="OsKYG_07g0027370"/>
</dbReference>
<dbReference type="EnsemblPlants" id="OsKYG_07g0027370.03">
    <property type="protein sequence ID" value="OsKYG_07g0027370.03"/>
    <property type="gene ID" value="OsKYG_07g0027370"/>
</dbReference>
<dbReference type="EnsemblPlants" id="OsLaMu_07g0026940.01">
    <property type="protein sequence ID" value="OsLaMu_07g0026940.01"/>
    <property type="gene ID" value="OsLaMu_07g0026940"/>
</dbReference>
<dbReference type="EnsemblPlants" id="OsLima_07g0026930.01">
    <property type="protein sequence ID" value="OsLima_07g0026930.01"/>
    <property type="gene ID" value="OsLima_07g0026930"/>
</dbReference>
<dbReference type="EnsemblPlants" id="OsLima_07g0026930.02">
    <property type="protein sequence ID" value="OsLima_07g0026930.02"/>
    <property type="gene ID" value="OsLima_07g0026930"/>
</dbReference>
<dbReference type="EnsemblPlants" id="OsLiXu_Ung0040870.02">
    <property type="protein sequence ID" value="OsLiXu_Ung0040870.02"/>
    <property type="gene ID" value="OsLiXu_Ung0040870"/>
</dbReference>
<dbReference type="EnsemblPlants" id="OsLiXu_Ung0040870.03">
    <property type="protein sequence ID" value="OsLiXu_Ung0040870.03"/>
    <property type="gene ID" value="OsLiXu_Ung0040870"/>
</dbReference>
<dbReference type="EnsemblPlants" id="OsLiXu_Ung0041090.01">
    <property type="protein sequence ID" value="OsLiXu_Ung0041090.01"/>
    <property type="gene ID" value="OsLiXu_Ung0041090"/>
</dbReference>
<dbReference type="EnsemblPlants" id="OsMH63_07G027010_01">
    <property type="protein sequence ID" value="OsMH63_07G027010_01"/>
    <property type="gene ID" value="OsMH63_07G027010"/>
</dbReference>
<dbReference type="EnsemblPlants" id="OsMH63_07G027010_02">
    <property type="protein sequence ID" value="OsMH63_07G027010_02"/>
    <property type="gene ID" value="OsMH63_07G027010"/>
</dbReference>
<dbReference type="EnsemblPlants" id="OsPr106_07g0027150.01">
    <property type="protein sequence ID" value="OsPr106_07g0027150.01"/>
    <property type="gene ID" value="OsPr106_07g0027150"/>
</dbReference>
<dbReference type="EnsemblPlants" id="OsPr106_07g0027150.03">
    <property type="protein sequence ID" value="OsPr106_07g0027150.03"/>
    <property type="gene ID" value="OsPr106_07g0027150"/>
</dbReference>
<dbReference type="Gramene" id="BGIOSGA026368-TA">
    <property type="protein sequence ID" value="BGIOSGA026368-PA"/>
    <property type="gene ID" value="BGIOSGA026368"/>
</dbReference>
<dbReference type="Gramene" id="OsIR64_07g0027650.01">
    <property type="protein sequence ID" value="OsIR64_07g0027650.01"/>
    <property type="gene ID" value="OsIR64_07g0027650"/>
</dbReference>
<dbReference type="Gramene" id="OsIR64_07g0027650.02">
    <property type="protein sequence ID" value="OsIR64_07g0027650.02"/>
    <property type="gene ID" value="OsIR64_07g0027650"/>
</dbReference>
<dbReference type="Gramene" id="OsKYG_07g0027370.02">
    <property type="protein sequence ID" value="OsKYG_07g0027370.02"/>
    <property type="gene ID" value="OsKYG_07g0027370"/>
</dbReference>
<dbReference type="Gramene" id="OsKYG_07g0027370.03">
    <property type="protein sequence ID" value="OsKYG_07g0027370.03"/>
    <property type="gene ID" value="OsKYG_07g0027370"/>
</dbReference>
<dbReference type="Gramene" id="OsLaMu_07g0026940.01">
    <property type="protein sequence ID" value="OsLaMu_07g0026940.01"/>
    <property type="gene ID" value="OsLaMu_07g0026940"/>
</dbReference>
<dbReference type="Gramene" id="OsLima_07g0026930.01">
    <property type="protein sequence ID" value="OsLima_07g0026930.01"/>
    <property type="gene ID" value="OsLima_07g0026930"/>
</dbReference>
<dbReference type="Gramene" id="OsLima_07g0026930.02">
    <property type="protein sequence ID" value="OsLima_07g0026930.02"/>
    <property type="gene ID" value="OsLima_07g0026930"/>
</dbReference>
<dbReference type="Gramene" id="OsLiXu_Ung0040870.02">
    <property type="protein sequence ID" value="OsLiXu_Ung0040870.02"/>
    <property type="gene ID" value="OsLiXu_Ung0040870"/>
</dbReference>
<dbReference type="Gramene" id="OsLiXu_Ung0040870.03">
    <property type="protein sequence ID" value="OsLiXu_Ung0040870.03"/>
    <property type="gene ID" value="OsLiXu_Ung0040870"/>
</dbReference>
<dbReference type="Gramene" id="OsLiXu_Ung0041090.01">
    <property type="protein sequence ID" value="OsLiXu_Ung0041090.01"/>
    <property type="gene ID" value="OsLiXu_Ung0041090"/>
</dbReference>
<dbReference type="Gramene" id="OsMH63_07G027010_01">
    <property type="protein sequence ID" value="OsMH63_07G027010_01"/>
    <property type="gene ID" value="OsMH63_07G027010"/>
</dbReference>
<dbReference type="Gramene" id="OsMH63_07G027010_02">
    <property type="protein sequence ID" value="OsMH63_07G027010_02"/>
    <property type="gene ID" value="OsMH63_07G027010"/>
</dbReference>
<dbReference type="Gramene" id="OsPr106_07g0027150.01">
    <property type="protein sequence ID" value="OsPr106_07g0027150.01"/>
    <property type="gene ID" value="OsPr106_07g0027150"/>
</dbReference>
<dbReference type="Gramene" id="OsPr106_07g0027150.03">
    <property type="protein sequence ID" value="OsPr106_07g0027150.03"/>
    <property type="gene ID" value="OsPr106_07g0027150"/>
</dbReference>
<dbReference type="HOGENOM" id="CLU_017375_0_2_1"/>
<dbReference type="OMA" id="GIGDGMD"/>
<dbReference type="Proteomes" id="UP000007015">
    <property type="component" value="Chromosome 7"/>
</dbReference>
<dbReference type="GO" id="GO:0005737">
    <property type="term" value="C:cytoplasm"/>
    <property type="evidence" value="ECO:0007669"/>
    <property type="project" value="UniProtKB-SubCell"/>
</dbReference>
<dbReference type="GO" id="GO:0005634">
    <property type="term" value="C:nucleus"/>
    <property type="evidence" value="ECO:0007669"/>
    <property type="project" value="UniProtKB-SubCell"/>
</dbReference>
<dbReference type="GO" id="GO:0035642">
    <property type="term" value="F:histone H3R17 methyltransferase activity"/>
    <property type="evidence" value="ECO:0000250"/>
    <property type="project" value="UniProtKB"/>
</dbReference>
<dbReference type="GO" id="GO:0070611">
    <property type="term" value="F:histone H3R2 methyltransferase activity"/>
    <property type="evidence" value="ECO:0000250"/>
    <property type="project" value="UniProtKB"/>
</dbReference>
<dbReference type="GO" id="GO:0140903">
    <property type="term" value="F:histone H3R26 methyltransferase activity"/>
    <property type="evidence" value="ECO:0000250"/>
    <property type="project" value="UniProtKB"/>
</dbReference>
<dbReference type="GO" id="GO:0035242">
    <property type="term" value="F:protein-arginine omega-N asymmetric methyltransferase activity"/>
    <property type="evidence" value="ECO:0007669"/>
    <property type="project" value="UniProtKB-EC"/>
</dbReference>
<dbReference type="GO" id="GO:0032259">
    <property type="term" value="P:methylation"/>
    <property type="evidence" value="ECO:0007669"/>
    <property type="project" value="UniProtKB-KW"/>
</dbReference>
<dbReference type="CDD" id="cd02440">
    <property type="entry name" value="AdoMet_MTases"/>
    <property type="match status" value="1"/>
</dbReference>
<dbReference type="FunFam" id="2.70.160.11:FF:000002">
    <property type="entry name" value="Probable histone-arginine methyltransferase CARM1"/>
    <property type="match status" value="1"/>
</dbReference>
<dbReference type="FunFam" id="3.40.50.150:FF:000052">
    <property type="entry name" value="Probable histone-arginine methyltransferase CARM1"/>
    <property type="match status" value="1"/>
</dbReference>
<dbReference type="Gene3D" id="2.70.160.11">
    <property type="entry name" value="Hnrnp arginine n-methyltransferase1"/>
    <property type="match status" value="1"/>
</dbReference>
<dbReference type="Gene3D" id="3.40.50.150">
    <property type="entry name" value="Vaccinia Virus protein VP39"/>
    <property type="match status" value="1"/>
</dbReference>
<dbReference type="InterPro" id="IPR025799">
    <property type="entry name" value="Arg_MeTrfase"/>
</dbReference>
<dbReference type="InterPro" id="IPR055135">
    <property type="entry name" value="PRMT_dom"/>
</dbReference>
<dbReference type="InterPro" id="IPR029063">
    <property type="entry name" value="SAM-dependent_MTases_sf"/>
</dbReference>
<dbReference type="PANTHER" id="PTHR11006:SF10">
    <property type="entry name" value="HISTONE-ARGININE METHYLTRANSFERASE CARMER-RELATED"/>
    <property type="match status" value="1"/>
</dbReference>
<dbReference type="PANTHER" id="PTHR11006">
    <property type="entry name" value="PROTEIN ARGININE N-METHYLTRANSFERASE"/>
    <property type="match status" value="1"/>
</dbReference>
<dbReference type="Pfam" id="PF25350">
    <property type="entry name" value="PH_PRMT_N"/>
    <property type="match status" value="1"/>
</dbReference>
<dbReference type="Pfam" id="PF06325">
    <property type="entry name" value="PrmA"/>
    <property type="match status" value="1"/>
</dbReference>
<dbReference type="Pfam" id="PF22528">
    <property type="entry name" value="PRMT_C"/>
    <property type="match status" value="1"/>
</dbReference>
<dbReference type="SUPFAM" id="SSF53335">
    <property type="entry name" value="S-adenosyl-L-methionine-dependent methyltransferases"/>
    <property type="match status" value="1"/>
</dbReference>
<dbReference type="PROSITE" id="PS51678">
    <property type="entry name" value="SAM_MT_PRMT"/>
    <property type="match status" value="1"/>
</dbReference>
<keyword id="KW-0156">Chromatin regulator</keyword>
<keyword id="KW-0963">Cytoplasm</keyword>
<keyword id="KW-0489">Methyltransferase</keyword>
<keyword id="KW-0539">Nucleus</keyword>
<keyword id="KW-1185">Reference proteome</keyword>
<keyword id="KW-0949">S-adenosyl-L-methionine</keyword>
<keyword id="KW-0804">Transcription</keyword>
<keyword id="KW-0805">Transcription regulation</keyword>
<keyword id="KW-0808">Transferase</keyword>
<evidence type="ECO:0000250" key="1"/>
<evidence type="ECO:0000255" key="2">
    <source>
        <dbReference type="PROSITE-ProRule" id="PRU01015"/>
    </source>
</evidence>
<evidence type="ECO:0000256" key="3">
    <source>
        <dbReference type="SAM" id="MobiDB-lite"/>
    </source>
</evidence>